<comment type="function">
    <text evidence="1">Produces ATP from ADP in the presence of a proton gradient across the membrane.</text>
</comment>
<comment type="subunit">
    <text evidence="1">F-type ATPases have 2 components, CF(1) - the catalytic core - and CF(0) - the membrane proton channel. CF(1) has five subunits: alpha(3), beta(3), gamma(1), delta(1), epsilon(1). CF(0) has three main subunits: a, b and c.</text>
</comment>
<comment type="subcellular location">
    <subcellularLocation>
        <location evidence="1">Cell inner membrane</location>
        <topology evidence="1">Peripheral membrane protein</topology>
    </subcellularLocation>
</comment>
<comment type="similarity">
    <text evidence="1">Belongs to the ATPase epsilon chain family.</text>
</comment>
<protein>
    <recommendedName>
        <fullName evidence="1">ATP synthase epsilon chain</fullName>
    </recommendedName>
    <alternativeName>
        <fullName evidence="1">ATP synthase F1 sector epsilon subunit</fullName>
    </alternativeName>
    <alternativeName>
        <fullName evidence="1">F-ATPase epsilon subunit</fullName>
    </alternativeName>
</protein>
<accession>A7H016</accession>
<name>ATPE_CAMC5</name>
<feature type="chain" id="PRO_1000056467" description="ATP synthase epsilon chain">
    <location>
        <begin position="1"/>
        <end position="129"/>
    </location>
</feature>
<keyword id="KW-0066">ATP synthesis</keyword>
<keyword id="KW-0997">Cell inner membrane</keyword>
<keyword id="KW-1003">Cell membrane</keyword>
<keyword id="KW-0139">CF(1)</keyword>
<keyword id="KW-0375">Hydrogen ion transport</keyword>
<keyword id="KW-0406">Ion transport</keyword>
<keyword id="KW-0472">Membrane</keyword>
<keyword id="KW-1185">Reference proteome</keyword>
<keyword id="KW-0813">Transport</keyword>
<gene>
    <name evidence="1" type="primary">atpC</name>
    <name type="ordered locus">Ccur92_15040</name>
    <name type="ORF">CCV52592_1739</name>
</gene>
<proteinExistence type="inferred from homology"/>
<evidence type="ECO:0000255" key="1">
    <source>
        <dbReference type="HAMAP-Rule" id="MF_00530"/>
    </source>
</evidence>
<dbReference type="EMBL" id="CP000767">
    <property type="protein sequence ID" value="EAU01075.1"/>
    <property type="molecule type" value="Genomic_DNA"/>
</dbReference>
<dbReference type="RefSeq" id="WP_009649328.1">
    <property type="nucleotide sequence ID" value="NC_009715.2"/>
</dbReference>
<dbReference type="SMR" id="A7H016"/>
<dbReference type="STRING" id="360105.CCV52592_1739"/>
<dbReference type="GeneID" id="61002799"/>
<dbReference type="KEGG" id="ccv:CCV52592_1739"/>
<dbReference type="HOGENOM" id="CLU_084338_2_1_7"/>
<dbReference type="OrthoDB" id="9799969at2"/>
<dbReference type="Proteomes" id="UP000006380">
    <property type="component" value="Chromosome"/>
</dbReference>
<dbReference type="GO" id="GO:0005886">
    <property type="term" value="C:plasma membrane"/>
    <property type="evidence" value="ECO:0007669"/>
    <property type="project" value="UniProtKB-SubCell"/>
</dbReference>
<dbReference type="GO" id="GO:0045259">
    <property type="term" value="C:proton-transporting ATP synthase complex"/>
    <property type="evidence" value="ECO:0007669"/>
    <property type="project" value="UniProtKB-KW"/>
</dbReference>
<dbReference type="GO" id="GO:0005524">
    <property type="term" value="F:ATP binding"/>
    <property type="evidence" value="ECO:0007669"/>
    <property type="project" value="UniProtKB-UniRule"/>
</dbReference>
<dbReference type="GO" id="GO:0046933">
    <property type="term" value="F:proton-transporting ATP synthase activity, rotational mechanism"/>
    <property type="evidence" value="ECO:0007669"/>
    <property type="project" value="UniProtKB-UniRule"/>
</dbReference>
<dbReference type="CDD" id="cd12152">
    <property type="entry name" value="F1-ATPase_delta"/>
    <property type="match status" value="1"/>
</dbReference>
<dbReference type="Gene3D" id="2.60.15.10">
    <property type="entry name" value="F0F1 ATP synthase delta/epsilon subunit, N-terminal"/>
    <property type="match status" value="1"/>
</dbReference>
<dbReference type="HAMAP" id="MF_00530">
    <property type="entry name" value="ATP_synth_epsil_bac"/>
    <property type="match status" value="1"/>
</dbReference>
<dbReference type="InterPro" id="IPR001469">
    <property type="entry name" value="ATP_synth_F1_dsu/esu"/>
</dbReference>
<dbReference type="InterPro" id="IPR020546">
    <property type="entry name" value="ATP_synth_F1_dsu/esu_N"/>
</dbReference>
<dbReference type="InterPro" id="IPR036771">
    <property type="entry name" value="ATPsynth_dsu/esu_N"/>
</dbReference>
<dbReference type="NCBIfam" id="TIGR01216">
    <property type="entry name" value="ATP_synt_epsi"/>
    <property type="match status" value="1"/>
</dbReference>
<dbReference type="PANTHER" id="PTHR13822">
    <property type="entry name" value="ATP SYNTHASE DELTA/EPSILON CHAIN"/>
    <property type="match status" value="1"/>
</dbReference>
<dbReference type="PANTHER" id="PTHR13822:SF10">
    <property type="entry name" value="ATP SYNTHASE EPSILON CHAIN, CHLOROPLASTIC"/>
    <property type="match status" value="1"/>
</dbReference>
<dbReference type="Pfam" id="PF02823">
    <property type="entry name" value="ATP-synt_DE_N"/>
    <property type="match status" value="1"/>
</dbReference>
<dbReference type="SUPFAM" id="SSF51344">
    <property type="entry name" value="Epsilon subunit of F1F0-ATP synthase N-terminal domain"/>
    <property type="match status" value="1"/>
</dbReference>
<reference key="1">
    <citation type="submission" date="2007-07" db="EMBL/GenBank/DDBJ databases">
        <title>Genome sequence of Campylobacter curvus 525.92 isolated from human feces.</title>
        <authorList>
            <person name="Fouts D.E."/>
            <person name="Mongodin E.F."/>
            <person name="Puiu D."/>
            <person name="Sebastian Y."/>
            <person name="Miller W.G."/>
            <person name="Mandrell R.E."/>
            <person name="Lastovica A.J."/>
            <person name="Nelson K.E."/>
        </authorList>
    </citation>
    <scope>NUCLEOTIDE SEQUENCE [LARGE SCALE GENOMIC DNA]</scope>
    <source>
        <strain>525.92</strain>
    </source>
</reference>
<organism>
    <name type="scientific">Campylobacter curvus (strain 525.92)</name>
    <dbReference type="NCBI Taxonomy" id="360105"/>
    <lineage>
        <taxon>Bacteria</taxon>
        <taxon>Pseudomonadati</taxon>
        <taxon>Campylobacterota</taxon>
        <taxon>Epsilonproteobacteria</taxon>
        <taxon>Campylobacterales</taxon>
        <taxon>Campylobacteraceae</taxon>
        <taxon>Campylobacter</taxon>
    </lineage>
</organism>
<sequence length="129" mass="13808">MDKLHLEIVTPQGQVFSDDVSSVVLPGSEGEFGVLPNHASLISLLKAGIIDIEDKNKNHDIVAINWGYAKIDEGKVVILADGAVYVAGNSESELANSLDQAKRLIESMSSDTNAFAATIAKMENVVRAR</sequence>